<sequence>MKWNQKNLPIVLASRSPARIELLNRIKIIPSHIIKADIDETPNLRELPAPLAVRLAYAKAIKVVSQIEESAIIIAADTVVAVGRRILPKATTYEEVKNCIKILSGRRHRVYTGLCIIKKENDRLTVRQKIAQTIVKFKKLSDEEINFYCSLDEGIDKAGGCKISGYAEAFIAFISGSYSNVMGLPLFETVNTLTSLGFKVYH</sequence>
<keyword id="KW-0963">Cytoplasm</keyword>
<keyword id="KW-0378">Hydrolase</keyword>
<keyword id="KW-0546">Nucleotide metabolism</keyword>
<feature type="chain" id="PRO_1000060961" description="Nucleoside triphosphate pyrophosphatase">
    <location>
        <begin position="1"/>
        <end position="202"/>
    </location>
</feature>
<feature type="active site" description="Proton acceptor" evidence="1">
    <location>
        <position position="77"/>
    </location>
</feature>
<accession>A8F031</accession>
<dbReference type="EC" id="3.6.1.9" evidence="1"/>
<dbReference type="EMBL" id="CP000409">
    <property type="protein sequence ID" value="ABV73964.1"/>
    <property type="molecule type" value="Genomic_DNA"/>
</dbReference>
<dbReference type="RefSeq" id="WP_012149159.1">
    <property type="nucleotide sequence ID" value="NC_009879.1"/>
</dbReference>
<dbReference type="SMR" id="A8F031"/>
<dbReference type="STRING" id="293613.A1E_05240"/>
<dbReference type="KEGG" id="rcm:A1E_05240"/>
<dbReference type="eggNOG" id="COG0424">
    <property type="taxonomic scope" value="Bacteria"/>
</dbReference>
<dbReference type="HOGENOM" id="CLU_040416_2_0_5"/>
<dbReference type="Proteomes" id="UP000007056">
    <property type="component" value="Chromosome"/>
</dbReference>
<dbReference type="GO" id="GO:0005737">
    <property type="term" value="C:cytoplasm"/>
    <property type="evidence" value="ECO:0007669"/>
    <property type="project" value="UniProtKB-SubCell"/>
</dbReference>
<dbReference type="GO" id="GO:0047429">
    <property type="term" value="F:nucleoside triphosphate diphosphatase activity"/>
    <property type="evidence" value="ECO:0007669"/>
    <property type="project" value="UniProtKB-EC"/>
</dbReference>
<dbReference type="GO" id="GO:0009117">
    <property type="term" value="P:nucleotide metabolic process"/>
    <property type="evidence" value="ECO:0007669"/>
    <property type="project" value="UniProtKB-KW"/>
</dbReference>
<dbReference type="CDD" id="cd00555">
    <property type="entry name" value="Maf"/>
    <property type="match status" value="1"/>
</dbReference>
<dbReference type="Gene3D" id="3.90.950.10">
    <property type="match status" value="1"/>
</dbReference>
<dbReference type="HAMAP" id="MF_00528">
    <property type="entry name" value="Maf"/>
    <property type="match status" value="1"/>
</dbReference>
<dbReference type="InterPro" id="IPR029001">
    <property type="entry name" value="ITPase-like_fam"/>
</dbReference>
<dbReference type="InterPro" id="IPR003697">
    <property type="entry name" value="Maf-like"/>
</dbReference>
<dbReference type="NCBIfam" id="TIGR00172">
    <property type="entry name" value="maf"/>
    <property type="match status" value="1"/>
</dbReference>
<dbReference type="PANTHER" id="PTHR43213">
    <property type="entry name" value="BIFUNCTIONAL DTTP/UTP PYROPHOSPHATASE/METHYLTRANSFERASE PROTEIN-RELATED"/>
    <property type="match status" value="1"/>
</dbReference>
<dbReference type="PANTHER" id="PTHR43213:SF5">
    <property type="entry name" value="BIFUNCTIONAL DTTP_UTP PYROPHOSPHATASE_METHYLTRANSFERASE PROTEIN-RELATED"/>
    <property type="match status" value="1"/>
</dbReference>
<dbReference type="Pfam" id="PF02545">
    <property type="entry name" value="Maf"/>
    <property type="match status" value="1"/>
</dbReference>
<dbReference type="PIRSF" id="PIRSF006305">
    <property type="entry name" value="Maf"/>
    <property type="match status" value="1"/>
</dbReference>
<dbReference type="SUPFAM" id="SSF52972">
    <property type="entry name" value="ITPase-like"/>
    <property type="match status" value="1"/>
</dbReference>
<proteinExistence type="inferred from homology"/>
<name>NTPP_RICCK</name>
<protein>
    <recommendedName>
        <fullName evidence="1">Nucleoside triphosphate pyrophosphatase</fullName>
        <ecNumber evidence="1">3.6.1.9</ecNumber>
    </recommendedName>
    <alternativeName>
        <fullName evidence="1">Nucleotide pyrophosphatase</fullName>
        <shortName evidence="1">Nucleotide PPase</shortName>
    </alternativeName>
</protein>
<comment type="function">
    <text evidence="1">Nucleoside triphosphate pyrophosphatase. May have a dual role in cell division arrest and in preventing the incorporation of modified nucleotides into cellular nucleic acids.</text>
</comment>
<comment type="catalytic activity">
    <reaction evidence="1">
        <text>a ribonucleoside 5'-triphosphate + H2O = a ribonucleoside 5'-phosphate + diphosphate + H(+)</text>
        <dbReference type="Rhea" id="RHEA:23996"/>
        <dbReference type="ChEBI" id="CHEBI:15377"/>
        <dbReference type="ChEBI" id="CHEBI:15378"/>
        <dbReference type="ChEBI" id="CHEBI:33019"/>
        <dbReference type="ChEBI" id="CHEBI:58043"/>
        <dbReference type="ChEBI" id="CHEBI:61557"/>
        <dbReference type="EC" id="3.6.1.9"/>
    </reaction>
</comment>
<comment type="catalytic activity">
    <reaction evidence="1">
        <text>a 2'-deoxyribonucleoside 5'-triphosphate + H2O = a 2'-deoxyribonucleoside 5'-phosphate + diphosphate + H(+)</text>
        <dbReference type="Rhea" id="RHEA:44644"/>
        <dbReference type="ChEBI" id="CHEBI:15377"/>
        <dbReference type="ChEBI" id="CHEBI:15378"/>
        <dbReference type="ChEBI" id="CHEBI:33019"/>
        <dbReference type="ChEBI" id="CHEBI:61560"/>
        <dbReference type="ChEBI" id="CHEBI:65317"/>
        <dbReference type="EC" id="3.6.1.9"/>
    </reaction>
</comment>
<comment type="cofactor">
    <cofactor evidence="1">
        <name>a divalent metal cation</name>
        <dbReference type="ChEBI" id="CHEBI:60240"/>
    </cofactor>
</comment>
<comment type="subcellular location">
    <subcellularLocation>
        <location evidence="1">Cytoplasm</location>
    </subcellularLocation>
</comment>
<comment type="similarity">
    <text evidence="1">Belongs to the Maf family.</text>
</comment>
<reference key="1">
    <citation type="submission" date="2007-09" db="EMBL/GenBank/DDBJ databases">
        <title>Complete genome sequence of Rickettsia canadensis.</title>
        <authorList>
            <person name="Madan A."/>
            <person name="Fahey J."/>
            <person name="Helton E."/>
            <person name="Ketteman M."/>
            <person name="Madan A."/>
            <person name="Rodrigues S."/>
            <person name="Sanchez A."/>
            <person name="Whiting M."/>
            <person name="Dasch G."/>
            <person name="Eremeeva M."/>
        </authorList>
    </citation>
    <scope>NUCLEOTIDE SEQUENCE [LARGE SCALE GENOMIC DNA]</scope>
    <source>
        <strain>McKiel</strain>
    </source>
</reference>
<evidence type="ECO:0000255" key="1">
    <source>
        <dbReference type="HAMAP-Rule" id="MF_00528"/>
    </source>
</evidence>
<gene>
    <name type="ordered locus">A1E_05240</name>
</gene>
<organism>
    <name type="scientific">Rickettsia canadensis (strain McKiel)</name>
    <dbReference type="NCBI Taxonomy" id="293613"/>
    <lineage>
        <taxon>Bacteria</taxon>
        <taxon>Pseudomonadati</taxon>
        <taxon>Pseudomonadota</taxon>
        <taxon>Alphaproteobacteria</taxon>
        <taxon>Rickettsiales</taxon>
        <taxon>Rickettsiaceae</taxon>
        <taxon>Rickettsieae</taxon>
        <taxon>Rickettsia</taxon>
        <taxon>belli group</taxon>
    </lineage>
</organism>